<evidence type="ECO:0000255" key="1">
    <source>
        <dbReference type="HAMAP-Rule" id="MF_01414"/>
    </source>
</evidence>
<organism>
    <name type="scientific">Escherichia coli O8 (strain IAI1)</name>
    <dbReference type="NCBI Taxonomy" id="585034"/>
    <lineage>
        <taxon>Bacteria</taxon>
        <taxon>Pseudomonadati</taxon>
        <taxon>Pseudomonadota</taxon>
        <taxon>Gammaproteobacteria</taxon>
        <taxon>Enterobacterales</taxon>
        <taxon>Enterobacteriaceae</taxon>
        <taxon>Escherichia</taxon>
    </lineage>
</organism>
<proteinExistence type="inferred from homology"/>
<accession>B7M0E3</accession>
<dbReference type="EC" id="1.6.5.2" evidence="1"/>
<dbReference type="EMBL" id="CU928160">
    <property type="protein sequence ID" value="CAQ96938.1"/>
    <property type="molecule type" value="Genomic_DNA"/>
</dbReference>
<dbReference type="RefSeq" id="WP_000600725.1">
    <property type="nucleotide sequence ID" value="NC_011741.1"/>
</dbReference>
<dbReference type="SMR" id="B7M0E3"/>
<dbReference type="GeneID" id="89519427"/>
<dbReference type="KEGG" id="ecr:ECIAI1_0048"/>
<dbReference type="HOGENOM" id="CLU_058643_0_2_6"/>
<dbReference type="GO" id="GO:0005886">
    <property type="term" value="C:plasma membrane"/>
    <property type="evidence" value="ECO:0007669"/>
    <property type="project" value="UniProtKB-SubCell"/>
</dbReference>
<dbReference type="GO" id="GO:0009055">
    <property type="term" value="F:electron transfer activity"/>
    <property type="evidence" value="ECO:0007669"/>
    <property type="project" value="TreeGrafter"/>
</dbReference>
<dbReference type="GO" id="GO:0010181">
    <property type="term" value="F:FMN binding"/>
    <property type="evidence" value="ECO:0007669"/>
    <property type="project" value="UniProtKB-UniRule"/>
</dbReference>
<dbReference type="GO" id="GO:0050136">
    <property type="term" value="F:NADH:ubiquinone reductase (non-electrogenic) activity"/>
    <property type="evidence" value="ECO:0007669"/>
    <property type="project" value="RHEA"/>
</dbReference>
<dbReference type="GO" id="GO:0008753">
    <property type="term" value="F:NADPH dehydrogenase (quinone) activity"/>
    <property type="evidence" value="ECO:0007669"/>
    <property type="project" value="RHEA"/>
</dbReference>
<dbReference type="GO" id="GO:1901381">
    <property type="term" value="P:positive regulation of potassium ion transmembrane transport"/>
    <property type="evidence" value="ECO:0007669"/>
    <property type="project" value="UniProtKB-UniRule"/>
</dbReference>
<dbReference type="GO" id="GO:0006813">
    <property type="term" value="P:potassium ion transport"/>
    <property type="evidence" value="ECO:0007669"/>
    <property type="project" value="InterPro"/>
</dbReference>
<dbReference type="FunFam" id="3.40.50.360:FF:000008">
    <property type="entry name" value="Glutathione-regulated potassium-efflux system ancillary protein KefF"/>
    <property type="match status" value="1"/>
</dbReference>
<dbReference type="Gene3D" id="3.40.50.360">
    <property type="match status" value="1"/>
</dbReference>
<dbReference type="HAMAP" id="MF_01414">
    <property type="entry name" value="K_H_efflux_KefF"/>
    <property type="match status" value="1"/>
</dbReference>
<dbReference type="InterPro" id="IPR003680">
    <property type="entry name" value="Flavodoxin_fold"/>
</dbReference>
<dbReference type="InterPro" id="IPR029039">
    <property type="entry name" value="Flavoprotein-like_sf"/>
</dbReference>
<dbReference type="InterPro" id="IPR023948">
    <property type="entry name" value="K_H_efflux_KefF"/>
</dbReference>
<dbReference type="InterPro" id="IPR046980">
    <property type="entry name" value="KefG/KefF"/>
</dbReference>
<dbReference type="NCBIfam" id="NF002044">
    <property type="entry name" value="PRK00871.1"/>
    <property type="match status" value="1"/>
</dbReference>
<dbReference type="PANTHER" id="PTHR47307:SF2">
    <property type="entry name" value="GLUTATHIONE-REGULATED POTASSIUM-EFFLUX SYSTEM ANCILLARY PROTEIN KEFF"/>
    <property type="match status" value="1"/>
</dbReference>
<dbReference type="PANTHER" id="PTHR47307">
    <property type="entry name" value="GLUTATHIONE-REGULATED POTASSIUM-EFFLUX SYSTEM ANCILLARY PROTEIN KEFG"/>
    <property type="match status" value="1"/>
</dbReference>
<dbReference type="Pfam" id="PF02525">
    <property type="entry name" value="Flavodoxin_2"/>
    <property type="match status" value="1"/>
</dbReference>
<dbReference type="SUPFAM" id="SSF52218">
    <property type="entry name" value="Flavoproteins"/>
    <property type="match status" value="1"/>
</dbReference>
<feature type="chain" id="PRO_1000145556" description="Glutathione-regulated potassium-efflux system ancillary protein KefF">
    <location>
        <begin position="1"/>
        <end position="176"/>
    </location>
</feature>
<feature type="binding site" evidence="1">
    <location>
        <position position="8"/>
    </location>
    <ligand>
        <name>FMN</name>
        <dbReference type="ChEBI" id="CHEBI:58210"/>
    </ligand>
</feature>
<feature type="binding site" evidence="1">
    <location>
        <begin position="14"/>
        <end position="17"/>
    </location>
    <ligand>
        <name>FMN</name>
        <dbReference type="ChEBI" id="CHEBI:58210"/>
    </ligand>
</feature>
<feature type="binding site" evidence="1">
    <location>
        <begin position="65"/>
        <end position="68"/>
    </location>
    <ligand>
        <name>FMN</name>
        <dbReference type="ChEBI" id="CHEBI:58210"/>
    </ligand>
</feature>
<feature type="binding site" evidence="1">
    <location>
        <begin position="105"/>
        <end position="108"/>
    </location>
    <ligand>
        <name>FMN</name>
        <dbReference type="ChEBI" id="CHEBI:58210"/>
    </ligand>
</feature>
<comment type="function">
    <text evidence="1">Regulatory subunit of a potassium efflux system that confers protection against electrophiles. Required for full activity of KefC. Shows redox enzymatic activity, but this enzymatic activity is not required for activation of KefC.</text>
</comment>
<comment type="catalytic activity">
    <reaction evidence="1">
        <text>a quinone + NADH + H(+) = a quinol + NAD(+)</text>
        <dbReference type="Rhea" id="RHEA:46160"/>
        <dbReference type="ChEBI" id="CHEBI:15378"/>
        <dbReference type="ChEBI" id="CHEBI:24646"/>
        <dbReference type="ChEBI" id="CHEBI:57540"/>
        <dbReference type="ChEBI" id="CHEBI:57945"/>
        <dbReference type="ChEBI" id="CHEBI:132124"/>
        <dbReference type="EC" id="1.6.5.2"/>
    </reaction>
</comment>
<comment type="catalytic activity">
    <reaction evidence="1">
        <text>a quinone + NADPH + H(+) = a quinol + NADP(+)</text>
        <dbReference type="Rhea" id="RHEA:46164"/>
        <dbReference type="ChEBI" id="CHEBI:15378"/>
        <dbReference type="ChEBI" id="CHEBI:24646"/>
        <dbReference type="ChEBI" id="CHEBI:57783"/>
        <dbReference type="ChEBI" id="CHEBI:58349"/>
        <dbReference type="ChEBI" id="CHEBI:132124"/>
        <dbReference type="EC" id="1.6.5.2"/>
    </reaction>
</comment>
<comment type="cofactor">
    <cofactor evidence="1">
        <name>FMN</name>
        <dbReference type="ChEBI" id="CHEBI:58210"/>
    </cofactor>
</comment>
<comment type="subunit">
    <text evidence="1">Homodimer. Interacts with KefC.</text>
</comment>
<comment type="subcellular location">
    <subcellularLocation>
        <location evidence="1">Cell inner membrane</location>
        <topology evidence="1">Peripheral membrane protein</topology>
        <orientation evidence="1">Cytoplasmic side</orientation>
    </subcellularLocation>
</comment>
<comment type="similarity">
    <text evidence="1">Belongs to the NAD(P)H dehydrogenase (quinone) family. KefF subfamily.</text>
</comment>
<reference key="1">
    <citation type="journal article" date="2009" name="PLoS Genet.">
        <title>Organised genome dynamics in the Escherichia coli species results in highly diverse adaptive paths.</title>
        <authorList>
            <person name="Touchon M."/>
            <person name="Hoede C."/>
            <person name="Tenaillon O."/>
            <person name="Barbe V."/>
            <person name="Baeriswyl S."/>
            <person name="Bidet P."/>
            <person name="Bingen E."/>
            <person name="Bonacorsi S."/>
            <person name="Bouchier C."/>
            <person name="Bouvet O."/>
            <person name="Calteau A."/>
            <person name="Chiapello H."/>
            <person name="Clermont O."/>
            <person name="Cruveiller S."/>
            <person name="Danchin A."/>
            <person name="Diard M."/>
            <person name="Dossat C."/>
            <person name="Karoui M.E."/>
            <person name="Frapy E."/>
            <person name="Garry L."/>
            <person name="Ghigo J.M."/>
            <person name="Gilles A.M."/>
            <person name="Johnson J."/>
            <person name="Le Bouguenec C."/>
            <person name="Lescat M."/>
            <person name="Mangenot S."/>
            <person name="Martinez-Jehanne V."/>
            <person name="Matic I."/>
            <person name="Nassif X."/>
            <person name="Oztas S."/>
            <person name="Petit M.A."/>
            <person name="Pichon C."/>
            <person name="Rouy Z."/>
            <person name="Ruf C.S."/>
            <person name="Schneider D."/>
            <person name="Tourret J."/>
            <person name="Vacherie B."/>
            <person name="Vallenet D."/>
            <person name="Medigue C."/>
            <person name="Rocha E.P.C."/>
            <person name="Denamur E."/>
        </authorList>
    </citation>
    <scope>NUCLEOTIDE SEQUENCE [LARGE SCALE GENOMIC DNA]</scope>
    <source>
        <strain>IAI1</strain>
    </source>
</reference>
<sequence length="176" mass="20170">MILIIYAHPYPHHSHANKRMLEQARTLEGVEIRSLYQLYPDFNIDIAAEQEALSRADLIVWQHPMQWYSIPPLLKLWIDKVFSHGWAYGHGGTALHGKHLLWAVTTGGGESHFEIGAHPGFDVLSQPLQATAIYCGLNWLPPFAMHCTFICDDETLEGQARHYKQRLLEWQEAHHG</sequence>
<keyword id="KW-0997">Cell inner membrane</keyword>
<keyword id="KW-1003">Cell membrane</keyword>
<keyword id="KW-0285">Flavoprotein</keyword>
<keyword id="KW-0288">FMN</keyword>
<keyword id="KW-0472">Membrane</keyword>
<keyword id="KW-0520">NAD</keyword>
<keyword id="KW-0560">Oxidoreductase</keyword>
<name>KEFF_ECO8A</name>
<gene>
    <name evidence="1" type="primary">kefF</name>
    <name type="ordered locus">ECIAI1_0048</name>
</gene>
<protein>
    <recommendedName>
        <fullName evidence="1">Glutathione-regulated potassium-efflux system ancillary protein KefF</fullName>
    </recommendedName>
    <alternativeName>
        <fullName evidence="1">Quinone oxidoreductase KefF</fullName>
        <ecNumber evidence="1">1.6.5.2</ecNumber>
    </alternativeName>
</protein>